<dbReference type="EC" id="4.3.2.10" evidence="1"/>
<dbReference type="EMBL" id="CP000570">
    <property type="protein sequence ID" value="ABN85217.1"/>
    <property type="status" value="ALT_INIT"/>
    <property type="molecule type" value="Genomic_DNA"/>
</dbReference>
<dbReference type="RefSeq" id="WP_004550994.1">
    <property type="nucleotide sequence ID" value="NC_009074.1"/>
</dbReference>
<dbReference type="SMR" id="A3NE93"/>
<dbReference type="GeneID" id="93061750"/>
<dbReference type="KEGG" id="bpd:BURPS668_3660"/>
<dbReference type="HOGENOM" id="CLU_048577_4_0_4"/>
<dbReference type="UniPathway" id="UPA00031">
    <property type="reaction ID" value="UER00010"/>
</dbReference>
<dbReference type="GO" id="GO:0005737">
    <property type="term" value="C:cytoplasm"/>
    <property type="evidence" value="ECO:0007669"/>
    <property type="project" value="UniProtKB-SubCell"/>
</dbReference>
<dbReference type="GO" id="GO:0000107">
    <property type="term" value="F:imidazoleglycerol-phosphate synthase activity"/>
    <property type="evidence" value="ECO:0007669"/>
    <property type="project" value="UniProtKB-UniRule"/>
</dbReference>
<dbReference type="GO" id="GO:0016829">
    <property type="term" value="F:lyase activity"/>
    <property type="evidence" value="ECO:0007669"/>
    <property type="project" value="UniProtKB-KW"/>
</dbReference>
<dbReference type="GO" id="GO:0000105">
    <property type="term" value="P:L-histidine biosynthetic process"/>
    <property type="evidence" value="ECO:0007669"/>
    <property type="project" value="UniProtKB-UniRule"/>
</dbReference>
<dbReference type="CDD" id="cd04731">
    <property type="entry name" value="HisF"/>
    <property type="match status" value="1"/>
</dbReference>
<dbReference type="FunFam" id="3.20.20.70:FF:000006">
    <property type="entry name" value="Imidazole glycerol phosphate synthase subunit HisF"/>
    <property type="match status" value="1"/>
</dbReference>
<dbReference type="Gene3D" id="3.20.20.70">
    <property type="entry name" value="Aldolase class I"/>
    <property type="match status" value="1"/>
</dbReference>
<dbReference type="HAMAP" id="MF_01013">
    <property type="entry name" value="HisF"/>
    <property type="match status" value="1"/>
</dbReference>
<dbReference type="InterPro" id="IPR013785">
    <property type="entry name" value="Aldolase_TIM"/>
</dbReference>
<dbReference type="InterPro" id="IPR006062">
    <property type="entry name" value="His_biosynth"/>
</dbReference>
<dbReference type="InterPro" id="IPR004651">
    <property type="entry name" value="HisF"/>
</dbReference>
<dbReference type="InterPro" id="IPR050064">
    <property type="entry name" value="IGPS_HisA/HisF"/>
</dbReference>
<dbReference type="InterPro" id="IPR011060">
    <property type="entry name" value="RibuloseP-bd_barrel"/>
</dbReference>
<dbReference type="NCBIfam" id="TIGR00735">
    <property type="entry name" value="hisF"/>
    <property type="match status" value="1"/>
</dbReference>
<dbReference type="PANTHER" id="PTHR21235:SF2">
    <property type="entry name" value="IMIDAZOLE GLYCEROL PHOSPHATE SYNTHASE HISHF"/>
    <property type="match status" value="1"/>
</dbReference>
<dbReference type="PANTHER" id="PTHR21235">
    <property type="entry name" value="IMIDAZOLE GLYCEROL PHOSPHATE SYNTHASE SUBUNIT HISF/H IGP SYNTHASE SUBUNIT HISF/H"/>
    <property type="match status" value="1"/>
</dbReference>
<dbReference type="Pfam" id="PF00977">
    <property type="entry name" value="His_biosynth"/>
    <property type="match status" value="1"/>
</dbReference>
<dbReference type="SUPFAM" id="SSF51366">
    <property type="entry name" value="Ribulose-phoshate binding barrel"/>
    <property type="match status" value="1"/>
</dbReference>
<comment type="function">
    <text evidence="1">IGPS catalyzes the conversion of PRFAR and glutamine to IGP, AICAR and glutamate. The HisF subunit catalyzes the cyclization activity that produces IGP and AICAR from PRFAR using the ammonia provided by the HisH subunit.</text>
</comment>
<comment type="catalytic activity">
    <reaction evidence="1">
        <text>5-[(5-phospho-1-deoxy-D-ribulos-1-ylimino)methylamino]-1-(5-phospho-beta-D-ribosyl)imidazole-4-carboxamide + L-glutamine = D-erythro-1-(imidazol-4-yl)glycerol 3-phosphate + 5-amino-1-(5-phospho-beta-D-ribosyl)imidazole-4-carboxamide + L-glutamate + H(+)</text>
        <dbReference type="Rhea" id="RHEA:24793"/>
        <dbReference type="ChEBI" id="CHEBI:15378"/>
        <dbReference type="ChEBI" id="CHEBI:29985"/>
        <dbReference type="ChEBI" id="CHEBI:58278"/>
        <dbReference type="ChEBI" id="CHEBI:58359"/>
        <dbReference type="ChEBI" id="CHEBI:58475"/>
        <dbReference type="ChEBI" id="CHEBI:58525"/>
        <dbReference type="EC" id="4.3.2.10"/>
    </reaction>
</comment>
<comment type="pathway">
    <text evidence="1">Amino-acid biosynthesis; L-histidine biosynthesis; L-histidine from 5-phospho-alpha-D-ribose 1-diphosphate: step 5/9.</text>
</comment>
<comment type="subunit">
    <text evidence="1">Heterodimer of HisH and HisF.</text>
</comment>
<comment type="subcellular location">
    <subcellularLocation>
        <location evidence="1">Cytoplasm</location>
    </subcellularLocation>
</comment>
<comment type="similarity">
    <text evidence="1">Belongs to the HisA/HisF family.</text>
</comment>
<comment type="sequence caution" evidence="2">
    <conflict type="erroneous initiation">
        <sequence resource="EMBL-CDS" id="ABN85217"/>
    </conflict>
</comment>
<reference key="1">
    <citation type="journal article" date="2010" name="Genome Biol. Evol.">
        <title>Continuing evolution of Burkholderia mallei through genome reduction and large-scale rearrangements.</title>
        <authorList>
            <person name="Losada L."/>
            <person name="Ronning C.M."/>
            <person name="DeShazer D."/>
            <person name="Woods D."/>
            <person name="Fedorova N."/>
            <person name="Kim H.S."/>
            <person name="Shabalina S.A."/>
            <person name="Pearson T.R."/>
            <person name="Brinkac L."/>
            <person name="Tan P."/>
            <person name="Nandi T."/>
            <person name="Crabtree J."/>
            <person name="Badger J."/>
            <person name="Beckstrom-Sternberg S."/>
            <person name="Saqib M."/>
            <person name="Schutzer S.E."/>
            <person name="Keim P."/>
            <person name="Nierman W.C."/>
        </authorList>
    </citation>
    <scope>NUCLEOTIDE SEQUENCE [LARGE SCALE GENOMIC DNA]</scope>
    <source>
        <strain>668</strain>
    </source>
</reference>
<name>HIS6_BURP6</name>
<evidence type="ECO:0000255" key="1">
    <source>
        <dbReference type="HAMAP-Rule" id="MF_01013"/>
    </source>
</evidence>
<evidence type="ECO:0000305" key="2"/>
<accession>A3NE93</accession>
<proteinExistence type="inferred from homology"/>
<protein>
    <recommendedName>
        <fullName evidence="1">Imidazole glycerol phosphate synthase subunit HisF</fullName>
        <ecNumber evidence="1">4.3.2.10</ecNumber>
    </recommendedName>
    <alternativeName>
        <fullName evidence="1">IGP synthase cyclase subunit</fullName>
    </alternativeName>
    <alternativeName>
        <fullName evidence="1">IGP synthase subunit HisF</fullName>
    </alternativeName>
    <alternativeName>
        <fullName evidence="1">ImGP synthase subunit HisF</fullName>
        <shortName evidence="1">IGPS subunit HisF</shortName>
    </alternativeName>
</protein>
<feature type="chain" id="PRO_0000319453" description="Imidazole glycerol phosphate synthase subunit HisF">
    <location>
        <begin position="1"/>
        <end position="257"/>
    </location>
</feature>
<feature type="active site" evidence="1">
    <location>
        <position position="12"/>
    </location>
</feature>
<feature type="active site" evidence="1">
    <location>
        <position position="131"/>
    </location>
</feature>
<organism>
    <name type="scientific">Burkholderia pseudomallei (strain 668)</name>
    <dbReference type="NCBI Taxonomy" id="320373"/>
    <lineage>
        <taxon>Bacteria</taxon>
        <taxon>Pseudomonadati</taxon>
        <taxon>Pseudomonadota</taxon>
        <taxon>Betaproteobacteria</taxon>
        <taxon>Burkholderiales</taxon>
        <taxon>Burkholderiaceae</taxon>
        <taxon>Burkholderia</taxon>
        <taxon>pseudomallei group</taxon>
    </lineage>
</organism>
<keyword id="KW-0028">Amino-acid biosynthesis</keyword>
<keyword id="KW-0963">Cytoplasm</keyword>
<keyword id="KW-0368">Histidine biosynthesis</keyword>
<keyword id="KW-0456">Lyase</keyword>
<sequence length="257" mass="26979">MALAKRIIPCLDVTAGRVVKGVNFVELRDAGDPVEIARRYDAQGADELTFLDITATSDGRDLILPIIEAVASQVFIPLTVGGGVRAVEDVRRLLNAGADKVSMNSSAVANPPLVRDAADKYGSQCIVVAIDAKRVSADGEPPRWEVFTHGGRKGTGLDAVEWARKMAELGAGEILLTSMDRDGTKAGFDLALTRAVSDAVPVPVIASGGVGSLEHLAAGITEGHADAVLAASIFHYGEHTVGEAKRFMAERGIAVRL</sequence>
<gene>
    <name evidence="1" type="primary">hisF</name>
    <name type="ordered locus">BURPS668_3660</name>
</gene>